<dbReference type="EC" id="2.1.3.15" evidence="1"/>
<dbReference type="EMBL" id="CP000448">
    <property type="protein sequence ID" value="ABI69144.1"/>
    <property type="molecule type" value="Genomic_DNA"/>
</dbReference>
<dbReference type="RefSeq" id="WP_011641239.1">
    <property type="nucleotide sequence ID" value="NC_008346.1"/>
</dbReference>
<dbReference type="SMR" id="Q0AVW0"/>
<dbReference type="STRING" id="335541.Swol_1846"/>
<dbReference type="KEGG" id="swo:Swol_1846"/>
<dbReference type="eggNOG" id="COG0777">
    <property type="taxonomic scope" value="Bacteria"/>
</dbReference>
<dbReference type="HOGENOM" id="CLU_015486_1_0_9"/>
<dbReference type="OrthoDB" id="9772975at2"/>
<dbReference type="UniPathway" id="UPA00655">
    <property type="reaction ID" value="UER00711"/>
</dbReference>
<dbReference type="Proteomes" id="UP000001968">
    <property type="component" value="Chromosome"/>
</dbReference>
<dbReference type="GO" id="GO:0009317">
    <property type="term" value="C:acetyl-CoA carboxylase complex"/>
    <property type="evidence" value="ECO:0007669"/>
    <property type="project" value="InterPro"/>
</dbReference>
<dbReference type="GO" id="GO:0003989">
    <property type="term" value="F:acetyl-CoA carboxylase activity"/>
    <property type="evidence" value="ECO:0007669"/>
    <property type="project" value="InterPro"/>
</dbReference>
<dbReference type="GO" id="GO:0005524">
    <property type="term" value="F:ATP binding"/>
    <property type="evidence" value="ECO:0007669"/>
    <property type="project" value="UniProtKB-KW"/>
</dbReference>
<dbReference type="GO" id="GO:0016743">
    <property type="term" value="F:carboxyl- or carbamoyltransferase activity"/>
    <property type="evidence" value="ECO:0007669"/>
    <property type="project" value="UniProtKB-UniRule"/>
</dbReference>
<dbReference type="GO" id="GO:0008270">
    <property type="term" value="F:zinc ion binding"/>
    <property type="evidence" value="ECO:0007669"/>
    <property type="project" value="UniProtKB-UniRule"/>
</dbReference>
<dbReference type="GO" id="GO:0006633">
    <property type="term" value="P:fatty acid biosynthetic process"/>
    <property type="evidence" value="ECO:0007669"/>
    <property type="project" value="UniProtKB-KW"/>
</dbReference>
<dbReference type="GO" id="GO:2001295">
    <property type="term" value="P:malonyl-CoA biosynthetic process"/>
    <property type="evidence" value="ECO:0007669"/>
    <property type="project" value="UniProtKB-UniRule"/>
</dbReference>
<dbReference type="Gene3D" id="3.90.226.10">
    <property type="entry name" value="2-enoyl-CoA Hydratase, Chain A, domain 1"/>
    <property type="match status" value="1"/>
</dbReference>
<dbReference type="HAMAP" id="MF_01395">
    <property type="entry name" value="AcetylCoA_CT_beta"/>
    <property type="match status" value="1"/>
</dbReference>
<dbReference type="InterPro" id="IPR034733">
    <property type="entry name" value="AcCoA_carboxyl_beta"/>
</dbReference>
<dbReference type="InterPro" id="IPR000438">
    <property type="entry name" value="Acetyl_CoA_COase_Trfase_b_su"/>
</dbReference>
<dbReference type="InterPro" id="IPR029045">
    <property type="entry name" value="ClpP/crotonase-like_dom_sf"/>
</dbReference>
<dbReference type="InterPro" id="IPR011762">
    <property type="entry name" value="COA_CT_N"/>
</dbReference>
<dbReference type="InterPro" id="IPR041010">
    <property type="entry name" value="Znf-ACC"/>
</dbReference>
<dbReference type="NCBIfam" id="TIGR00515">
    <property type="entry name" value="accD"/>
    <property type="match status" value="1"/>
</dbReference>
<dbReference type="PANTHER" id="PTHR42995">
    <property type="entry name" value="ACETYL-COENZYME A CARBOXYLASE CARBOXYL TRANSFERASE SUBUNIT BETA, CHLOROPLASTIC"/>
    <property type="match status" value="1"/>
</dbReference>
<dbReference type="PANTHER" id="PTHR42995:SF5">
    <property type="entry name" value="ACETYL-COENZYME A CARBOXYLASE CARBOXYL TRANSFERASE SUBUNIT BETA, CHLOROPLASTIC"/>
    <property type="match status" value="1"/>
</dbReference>
<dbReference type="Pfam" id="PF01039">
    <property type="entry name" value="Carboxyl_trans"/>
    <property type="match status" value="1"/>
</dbReference>
<dbReference type="Pfam" id="PF17848">
    <property type="entry name" value="Zn_ribbon_ACC"/>
    <property type="match status" value="1"/>
</dbReference>
<dbReference type="PRINTS" id="PR01070">
    <property type="entry name" value="ACCCTRFRASEB"/>
</dbReference>
<dbReference type="SUPFAM" id="SSF52096">
    <property type="entry name" value="ClpP/crotonase"/>
    <property type="match status" value="1"/>
</dbReference>
<dbReference type="PROSITE" id="PS50980">
    <property type="entry name" value="COA_CT_NTER"/>
    <property type="match status" value="1"/>
</dbReference>
<reference key="1">
    <citation type="journal article" date="2010" name="Environ. Microbiol.">
        <title>The genome of Syntrophomonas wolfei: new insights into syntrophic metabolism and biohydrogen production.</title>
        <authorList>
            <person name="Sieber J.R."/>
            <person name="Sims D.R."/>
            <person name="Han C."/>
            <person name="Kim E."/>
            <person name="Lykidis A."/>
            <person name="Lapidus A.L."/>
            <person name="McDonnald E."/>
            <person name="Rohlin L."/>
            <person name="Culley D.E."/>
            <person name="Gunsalus R."/>
            <person name="McInerney M.J."/>
        </authorList>
    </citation>
    <scope>NUCLEOTIDE SEQUENCE [LARGE SCALE GENOMIC DNA]</scope>
    <source>
        <strain>DSM 2245B / Goettingen</strain>
    </source>
</reference>
<sequence length="282" mass="30759">MIKNTFSRKKYFALSRRMEKEEEEKKVALPINCPSCSARIAAEALQRNLKVCPKCQHHFSLSARERIDLMVDKDSFQEFDADLSSFNLLDFPGYQEKLEKAQELSGSREGIITGLASIDGHKLVLGVMESGFMMASMGSVVGEKVCRAVEQAMELSCPLLICSCSGGARMQEGMVALMQMAKTSAVLGKFNQAGLLYISLLTHPTTGGVSASFASLADIILAEPGALIGFAGPRVIKQTIGQQLPPRFQRSEFLLEHGMIDLLVERSQLKATLSSLLGLHQG</sequence>
<evidence type="ECO:0000255" key="1">
    <source>
        <dbReference type="HAMAP-Rule" id="MF_01395"/>
    </source>
</evidence>
<evidence type="ECO:0000255" key="2">
    <source>
        <dbReference type="PROSITE-ProRule" id="PRU01136"/>
    </source>
</evidence>
<keyword id="KW-0067">ATP-binding</keyword>
<keyword id="KW-0963">Cytoplasm</keyword>
<keyword id="KW-0275">Fatty acid biosynthesis</keyword>
<keyword id="KW-0276">Fatty acid metabolism</keyword>
<keyword id="KW-0444">Lipid biosynthesis</keyword>
<keyword id="KW-0443">Lipid metabolism</keyword>
<keyword id="KW-0479">Metal-binding</keyword>
<keyword id="KW-0547">Nucleotide-binding</keyword>
<keyword id="KW-1185">Reference proteome</keyword>
<keyword id="KW-0808">Transferase</keyword>
<keyword id="KW-0862">Zinc</keyword>
<keyword id="KW-0863">Zinc-finger</keyword>
<protein>
    <recommendedName>
        <fullName evidence="1">Acetyl-coenzyme A carboxylase carboxyl transferase subunit beta</fullName>
        <shortName evidence="1">ACCase subunit beta</shortName>
        <shortName evidence="1">Acetyl-CoA carboxylase carboxyltransferase subunit beta</shortName>
        <ecNumber evidence="1">2.1.3.15</ecNumber>
    </recommendedName>
</protein>
<feature type="chain" id="PRO_0000389893" description="Acetyl-coenzyme A carboxylase carboxyl transferase subunit beta">
    <location>
        <begin position="1"/>
        <end position="282"/>
    </location>
</feature>
<feature type="domain" description="CoA carboxyltransferase N-terminal" evidence="2">
    <location>
        <begin position="29"/>
        <end position="282"/>
    </location>
</feature>
<feature type="zinc finger region" description="C4-type" evidence="1">
    <location>
        <begin position="33"/>
        <end position="55"/>
    </location>
</feature>
<feature type="binding site" evidence="1">
    <location>
        <position position="33"/>
    </location>
    <ligand>
        <name>Zn(2+)</name>
        <dbReference type="ChEBI" id="CHEBI:29105"/>
    </ligand>
</feature>
<feature type="binding site" evidence="1">
    <location>
        <position position="36"/>
    </location>
    <ligand>
        <name>Zn(2+)</name>
        <dbReference type="ChEBI" id="CHEBI:29105"/>
    </ligand>
</feature>
<feature type="binding site" evidence="1">
    <location>
        <position position="52"/>
    </location>
    <ligand>
        <name>Zn(2+)</name>
        <dbReference type="ChEBI" id="CHEBI:29105"/>
    </ligand>
</feature>
<feature type="binding site" evidence="1">
    <location>
        <position position="55"/>
    </location>
    <ligand>
        <name>Zn(2+)</name>
        <dbReference type="ChEBI" id="CHEBI:29105"/>
    </ligand>
</feature>
<gene>
    <name evidence="1" type="primary">accD</name>
    <name type="ordered locus">Swol_1846</name>
</gene>
<proteinExistence type="inferred from homology"/>
<name>ACCD_SYNWW</name>
<organism>
    <name type="scientific">Syntrophomonas wolfei subsp. wolfei (strain DSM 2245B / Goettingen)</name>
    <dbReference type="NCBI Taxonomy" id="335541"/>
    <lineage>
        <taxon>Bacteria</taxon>
        <taxon>Bacillati</taxon>
        <taxon>Bacillota</taxon>
        <taxon>Clostridia</taxon>
        <taxon>Eubacteriales</taxon>
        <taxon>Syntrophomonadaceae</taxon>
        <taxon>Syntrophomonas</taxon>
    </lineage>
</organism>
<accession>Q0AVW0</accession>
<comment type="function">
    <text evidence="1">Component of the acetyl coenzyme A carboxylase (ACC) complex. Biotin carboxylase (BC) catalyzes the carboxylation of biotin on its carrier protein (BCCP) and then the CO(2) group is transferred by the transcarboxylase to acetyl-CoA to form malonyl-CoA.</text>
</comment>
<comment type="catalytic activity">
    <reaction evidence="1">
        <text>N(6)-carboxybiotinyl-L-lysyl-[protein] + acetyl-CoA = N(6)-biotinyl-L-lysyl-[protein] + malonyl-CoA</text>
        <dbReference type="Rhea" id="RHEA:54728"/>
        <dbReference type="Rhea" id="RHEA-COMP:10505"/>
        <dbReference type="Rhea" id="RHEA-COMP:10506"/>
        <dbReference type="ChEBI" id="CHEBI:57288"/>
        <dbReference type="ChEBI" id="CHEBI:57384"/>
        <dbReference type="ChEBI" id="CHEBI:83144"/>
        <dbReference type="ChEBI" id="CHEBI:83145"/>
        <dbReference type="EC" id="2.1.3.15"/>
    </reaction>
</comment>
<comment type="cofactor">
    <cofactor evidence="1">
        <name>Zn(2+)</name>
        <dbReference type="ChEBI" id="CHEBI:29105"/>
    </cofactor>
    <text evidence="1">Binds 1 zinc ion per subunit.</text>
</comment>
<comment type="pathway">
    <text evidence="1">Lipid metabolism; malonyl-CoA biosynthesis; malonyl-CoA from acetyl-CoA: step 1/1.</text>
</comment>
<comment type="subunit">
    <text evidence="1">Acetyl-CoA carboxylase is a heterohexamer composed of biotin carboxyl carrier protein (AccB), biotin carboxylase (AccC) and two subunits each of ACCase subunit alpha (AccA) and ACCase subunit beta (AccD).</text>
</comment>
<comment type="subcellular location">
    <subcellularLocation>
        <location evidence="1">Cytoplasm</location>
    </subcellularLocation>
</comment>
<comment type="similarity">
    <text evidence="1">Belongs to the AccD/PCCB family.</text>
</comment>